<gene>
    <name evidence="1" type="primary">cobT</name>
    <name type="synonym">cobU</name>
    <name type="ordered locus">PA1279</name>
</gene>
<sequence>MSLQWWRDTCREADPQMRRRAAERQDRLTKPRGSLGRLEQVAIDLAALQGRERPSLERIWVTVFAGDHGVVAEGISAYPQAVTGEMLRNFVRGGAAISVLARELGAGLEVVDLGTAFPLEALPGVRHLRLAAGTANFVEAPAMGAEECLLALEAGRESVRRAEQAGSQLFIGGEMGIGNTTAAAAMACALLDAPASALVGPGTGLDASGVAHKAAVIERALALHGAHRADPFETLRRLGGLEIAALAGAYLACAQKGMVALVDGYICSVAALCAVRLNPACRDWLLFAHSGAEPGHRHVLEALAAQPLLDLGLRLGEGSGAALAVPLLRQACALHAGMATFAEAAVSDRPA</sequence>
<reference key="1">
    <citation type="journal article" date="2000" name="Nature">
        <title>Complete genome sequence of Pseudomonas aeruginosa PAO1, an opportunistic pathogen.</title>
        <authorList>
            <person name="Stover C.K."/>
            <person name="Pham X.-Q.T."/>
            <person name="Erwin A.L."/>
            <person name="Mizoguchi S.D."/>
            <person name="Warrener P."/>
            <person name="Hickey M.J."/>
            <person name="Brinkman F.S.L."/>
            <person name="Hufnagle W.O."/>
            <person name="Kowalik D.J."/>
            <person name="Lagrou M."/>
            <person name="Garber R.L."/>
            <person name="Goltry L."/>
            <person name="Tolentino E."/>
            <person name="Westbrock-Wadman S."/>
            <person name="Yuan Y."/>
            <person name="Brody L.L."/>
            <person name="Coulter S.N."/>
            <person name="Folger K.R."/>
            <person name="Kas A."/>
            <person name="Larbig K."/>
            <person name="Lim R.M."/>
            <person name="Smith K.A."/>
            <person name="Spencer D.H."/>
            <person name="Wong G.K.-S."/>
            <person name="Wu Z."/>
            <person name="Paulsen I.T."/>
            <person name="Reizer J."/>
            <person name="Saier M.H. Jr."/>
            <person name="Hancock R.E.W."/>
            <person name="Lory S."/>
            <person name="Olson M.V."/>
        </authorList>
    </citation>
    <scope>NUCLEOTIDE SEQUENCE [LARGE SCALE GENOMIC DNA]</scope>
    <source>
        <strain>ATCC 15692 / DSM 22644 / CIP 104116 / JCM 14847 / LMG 12228 / 1C / PRS 101 / PAO1</strain>
    </source>
</reference>
<comment type="function">
    <text evidence="1">Catalyzes the synthesis of alpha-ribazole-5'-phosphate from nicotinate mononucleotide (NAMN) and 5,6-dimethylbenzimidazole (DMB).</text>
</comment>
<comment type="catalytic activity">
    <reaction evidence="1">
        <text>5,6-dimethylbenzimidazole + nicotinate beta-D-ribonucleotide = alpha-ribazole 5'-phosphate + nicotinate + H(+)</text>
        <dbReference type="Rhea" id="RHEA:11196"/>
        <dbReference type="ChEBI" id="CHEBI:15378"/>
        <dbReference type="ChEBI" id="CHEBI:15890"/>
        <dbReference type="ChEBI" id="CHEBI:32544"/>
        <dbReference type="ChEBI" id="CHEBI:57502"/>
        <dbReference type="ChEBI" id="CHEBI:57918"/>
        <dbReference type="EC" id="2.4.2.21"/>
    </reaction>
</comment>
<comment type="pathway">
    <text evidence="1">Nucleoside biosynthesis; alpha-ribazole biosynthesis; alpha-ribazole from 5,6-dimethylbenzimidazole: step 1/2.</text>
</comment>
<comment type="similarity">
    <text evidence="1">Belongs to the CobT family.</text>
</comment>
<evidence type="ECO:0000255" key="1">
    <source>
        <dbReference type="HAMAP-Rule" id="MF_00230"/>
    </source>
</evidence>
<keyword id="KW-0169">Cobalamin biosynthesis</keyword>
<keyword id="KW-0328">Glycosyltransferase</keyword>
<keyword id="KW-1185">Reference proteome</keyword>
<keyword id="KW-0808">Transferase</keyword>
<accession>Q9I465</accession>
<protein>
    <recommendedName>
        <fullName evidence="1">Nicotinate-nucleotide--dimethylbenzimidazole phosphoribosyltransferase</fullName>
        <shortName evidence="1">NN:DBI PRT</shortName>
        <ecNumber evidence="1">2.4.2.21</ecNumber>
    </recommendedName>
    <alternativeName>
        <fullName evidence="1">N(1)-alpha-phosphoribosyltransferase</fullName>
    </alternativeName>
</protein>
<proteinExistence type="inferred from homology"/>
<dbReference type="EC" id="2.4.2.21" evidence="1"/>
<dbReference type="EMBL" id="AE004091">
    <property type="protein sequence ID" value="AAG04668.1"/>
    <property type="molecule type" value="Genomic_DNA"/>
</dbReference>
<dbReference type="PIR" id="E83486">
    <property type="entry name" value="E83486"/>
</dbReference>
<dbReference type="RefSeq" id="NP_249970.1">
    <property type="nucleotide sequence ID" value="NC_002516.2"/>
</dbReference>
<dbReference type="RefSeq" id="WP_003112354.1">
    <property type="nucleotide sequence ID" value="NZ_QZGE01000005.1"/>
</dbReference>
<dbReference type="SMR" id="Q9I465"/>
<dbReference type="FunCoup" id="Q9I465">
    <property type="interactions" value="145"/>
</dbReference>
<dbReference type="STRING" id="208964.PA1279"/>
<dbReference type="PaxDb" id="208964-PA1279"/>
<dbReference type="DNASU" id="881425"/>
<dbReference type="GeneID" id="881425"/>
<dbReference type="KEGG" id="pae:PA1279"/>
<dbReference type="PATRIC" id="fig|208964.12.peg.1329"/>
<dbReference type="PseudoCAP" id="PA1279"/>
<dbReference type="HOGENOM" id="CLU_002982_0_1_6"/>
<dbReference type="InParanoid" id="Q9I465"/>
<dbReference type="OrthoDB" id="9781491at2"/>
<dbReference type="PhylomeDB" id="Q9I465"/>
<dbReference type="BioCyc" id="PAER208964:G1FZ6-1304-MONOMER"/>
<dbReference type="UniPathway" id="UPA00061">
    <property type="reaction ID" value="UER00516"/>
</dbReference>
<dbReference type="Proteomes" id="UP000002438">
    <property type="component" value="Chromosome"/>
</dbReference>
<dbReference type="GO" id="GO:0008939">
    <property type="term" value="F:nicotinate-nucleotide-dimethylbenzimidazole phosphoribosyltransferase activity"/>
    <property type="evidence" value="ECO:0007669"/>
    <property type="project" value="UniProtKB-UniRule"/>
</dbReference>
<dbReference type="GO" id="GO:0009236">
    <property type="term" value="P:cobalamin biosynthetic process"/>
    <property type="evidence" value="ECO:0007669"/>
    <property type="project" value="UniProtKB-KW"/>
</dbReference>
<dbReference type="CDD" id="cd02439">
    <property type="entry name" value="DMB-PRT_CobT"/>
    <property type="match status" value="1"/>
</dbReference>
<dbReference type="FunFam" id="3.40.50.10210:FF:000001">
    <property type="entry name" value="Nicotinate-nucleotide--dimethylbenzimidazole phosphoribosyltransferase"/>
    <property type="match status" value="1"/>
</dbReference>
<dbReference type="Gene3D" id="1.10.1610.10">
    <property type="match status" value="1"/>
</dbReference>
<dbReference type="Gene3D" id="3.40.50.10210">
    <property type="match status" value="1"/>
</dbReference>
<dbReference type="HAMAP" id="MF_00230">
    <property type="entry name" value="CobT"/>
    <property type="match status" value="1"/>
</dbReference>
<dbReference type="InterPro" id="IPR003200">
    <property type="entry name" value="Nict_dMeBzImd_PRibTrfase"/>
</dbReference>
<dbReference type="InterPro" id="IPR017846">
    <property type="entry name" value="Nict_dMeBzImd_PRibTrfase_bact"/>
</dbReference>
<dbReference type="InterPro" id="IPR023195">
    <property type="entry name" value="Nict_dMeBzImd_PRibTrfase_N"/>
</dbReference>
<dbReference type="InterPro" id="IPR036087">
    <property type="entry name" value="Nict_dMeBzImd_PRibTrfase_sf"/>
</dbReference>
<dbReference type="NCBIfam" id="TIGR03160">
    <property type="entry name" value="cobT_DBIPRT"/>
    <property type="match status" value="1"/>
</dbReference>
<dbReference type="NCBIfam" id="NF000996">
    <property type="entry name" value="PRK00105.1"/>
    <property type="match status" value="1"/>
</dbReference>
<dbReference type="PANTHER" id="PTHR43463">
    <property type="entry name" value="NICOTINATE-NUCLEOTIDE--DIMETHYLBENZIMIDAZOLE PHOSPHORIBOSYLTRANSFERASE"/>
    <property type="match status" value="1"/>
</dbReference>
<dbReference type="PANTHER" id="PTHR43463:SF1">
    <property type="entry name" value="NICOTINATE-NUCLEOTIDE--DIMETHYLBENZIMIDAZOLE PHOSPHORIBOSYLTRANSFERASE"/>
    <property type="match status" value="1"/>
</dbReference>
<dbReference type="Pfam" id="PF02277">
    <property type="entry name" value="DBI_PRT"/>
    <property type="match status" value="1"/>
</dbReference>
<dbReference type="SUPFAM" id="SSF52733">
    <property type="entry name" value="Nicotinate mononucleotide:5,6-dimethylbenzimidazole phosphoribosyltransferase (CobT)"/>
    <property type="match status" value="1"/>
</dbReference>
<organism>
    <name type="scientific">Pseudomonas aeruginosa (strain ATCC 15692 / DSM 22644 / CIP 104116 / JCM 14847 / LMG 12228 / 1C / PRS 101 / PAO1)</name>
    <dbReference type="NCBI Taxonomy" id="208964"/>
    <lineage>
        <taxon>Bacteria</taxon>
        <taxon>Pseudomonadati</taxon>
        <taxon>Pseudomonadota</taxon>
        <taxon>Gammaproteobacteria</taxon>
        <taxon>Pseudomonadales</taxon>
        <taxon>Pseudomonadaceae</taxon>
        <taxon>Pseudomonas</taxon>
    </lineage>
</organism>
<feature type="chain" id="PRO_0000167060" description="Nicotinate-nucleotide--dimethylbenzimidazole phosphoribosyltransferase">
    <location>
        <begin position="1"/>
        <end position="351"/>
    </location>
</feature>
<feature type="active site" description="Proton acceptor" evidence="1">
    <location>
        <position position="317"/>
    </location>
</feature>
<name>COBT_PSEAE</name>